<keyword id="KW-0963">Cytoplasm</keyword>
<keyword id="KW-0378">Hydrolase</keyword>
<keyword id="KW-0546">Nucleotide metabolism</keyword>
<keyword id="KW-1185">Reference proteome</keyword>
<organism>
    <name type="scientific">Corynebacterium glutamicum (strain ATCC 13032 / DSM 20300 / JCM 1318 / BCRC 11384 / CCUG 27702 / LMG 3730 / NBRC 12168 / NCIMB 10025 / NRRL B-2784 / 534)</name>
    <dbReference type="NCBI Taxonomy" id="196627"/>
    <lineage>
        <taxon>Bacteria</taxon>
        <taxon>Bacillati</taxon>
        <taxon>Actinomycetota</taxon>
        <taxon>Actinomycetes</taxon>
        <taxon>Mycobacteriales</taxon>
        <taxon>Corynebacteriaceae</taxon>
        <taxon>Corynebacterium</taxon>
    </lineage>
</organism>
<gene>
    <name type="ordered locus">Cgl0705</name>
    <name type="ordered locus">cg0809</name>
</gene>
<reference key="1">
    <citation type="journal article" date="2003" name="Appl. Microbiol. Biotechnol.">
        <title>The Corynebacterium glutamicum genome: features and impacts on biotechnological processes.</title>
        <authorList>
            <person name="Ikeda M."/>
            <person name="Nakagawa S."/>
        </authorList>
    </citation>
    <scope>NUCLEOTIDE SEQUENCE [LARGE SCALE GENOMIC DNA]</scope>
    <source>
        <strain>ATCC 13032 / DSM 20300 / JCM 1318 / BCRC 11384 / CCUG 27702 / LMG 3730 / NBRC 12168 / NCIMB 10025 / NRRL B-2784 / 534</strain>
    </source>
</reference>
<reference key="2">
    <citation type="journal article" date="2003" name="J. Biotechnol.">
        <title>The complete Corynebacterium glutamicum ATCC 13032 genome sequence and its impact on the production of L-aspartate-derived amino acids and vitamins.</title>
        <authorList>
            <person name="Kalinowski J."/>
            <person name="Bathe B."/>
            <person name="Bartels D."/>
            <person name="Bischoff N."/>
            <person name="Bott M."/>
            <person name="Burkovski A."/>
            <person name="Dusch N."/>
            <person name="Eggeling L."/>
            <person name="Eikmanns B.J."/>
            <person name="Gaigalat L."/>
            <person name="Goesmann A."/>
            <person name="Hartmann M."/>
            <person name="Huthmacher K."/>
            <person name="Kraemer R."/>
            <person name="Linke B."/>
            <person name="McHardy A.C."/>
            <person name="Meyer F."/>
            <person name="Moeckel B."/>
            <person name="Pfefferle W."/>
            <person name="Puehler A."/>
            <person name="Rey D.A."/>
            <person name="Rueckert C."/>
            <person name="Rupp O."/>
            <person name="Sahm H."/>
            <person name="Wendisch V.F."/>
            <person name="Wiegraebe I."/>
            <person name="Tauch A."/>
        </authorList>
    </citation>
    <scope>NUCLEOTIDE SEQUENCE [LARGE SCALE GENOMIC DNA]</scope>
    <source>
        <strain>ATCC 13032 / DSM 20300 / JCM 1318 / BCRC 11384 / CCUG 27702 / LMG 3730 / NBRC 12168 / NCIMB 10025 / NRRL B-2784 / 534</strain>
    </source>
</reference>
<comment type="function">
    <text evidence="1">Nucleoside triphosphate pyrophosphatase. May have a dual role in cell division arrest and in preventing the incorporation of modified nucleotides into cellular nucleic acids.</text>
</comment>
<comment type="catalytic activity">
    <reaction evidence="1">
        <text>a ribonucleoside 5'-triphosphate + H2O = a ribonucleoside 5'-phosphate + diphosphate + H(+)</text>
        <dbReference type="Rhea" id="RHEA:23996"/>
        <dbReference type="ChEBI" id="CHEBI:15377"/>
        <dbReference type="ChEBI" id="CHEBI:15378"/>
        <dbReference type="ChEBI" id="CHEBI:33019"/>
        <dbReference type="ChEBI" id="CHEBI:58043"/>
        <dbReference type="ChEBI" id="CHEBI:61557"/>
        <dbReference type="EC" id="3.6.1.9"/>
    </reaction>
</comment>
<comment type="catalytic activity">
    <reaction evidence="1">
        <text>a 2'-deoxyribonucleoside 5'-triphosphate + H2O = a 2'-deoxyribonucleoside 5'-phosphate + diphosphate + H(+)</text>
        <dbReference type="Rhea" id="RHEA:44644"/>
        <dbReference type="ChEBI" id="CHEBI:15377"/>
        <dbReference type="ChEBI" id="CHEBI:15378"/>
        <dbReference type="ChEBI" id="CHEBI:33019"/>
        <dbReference type="ChEBI" id="CHEBI:61560"/>
        <dbReference type="ChEBI" id="CHEBI:65317"/>
        <dbReference type="EC" id="3.6.1.9"/>
    </reaction>
</comment>
<comment type="cofactor">
    <cofactor evidence="1">
        <name>a divalent metal cation</name>
        <dbReference type="ChEBI" id="CHEBI:60240"/>
    </cofactor>
</comment>
<comment type="subcellular location">
    <subcellularLocation>
        <location evidence="1">Cytoplasm</location>
    </subcellularLocation>
</comment>
<comment type="similarity">
    <text evidence="1">Belongs to the Maf family.</text>
</comment>
<evidence type="ECO:0000255" key="1">
    <source>
        <dbReference type="HAMAP-Rule" id="MF_00528"/>
    </source>
</evidence>
<dbReference type="EC" id="3.6.1.9" evidence="1"/>
<dbReference type="EMBL" id="BA000036">
    <property type="protein sequence ID" value="BAB98098.1"/>
    <property type="molecule type" value="Genomic_DNA"/>
</dbReference>
<dbReference type="EMBL" id="BX927150">
    <property type="protein sequence ID" value="CAF19410.1"/>
    <property type="molecule type" value="Genomic_DNA"/>
</dbReference>
<dbReference type="RefSeq" id="NP_599937.1">
    <property type="nucleotide sequence ID" value="NC_003450.3"/>
</dbReference>
<dbReference type="RefSeq" id="WP_011013831.1">
    <property type="nucleotide sequence ID" value="NC_006958.1"/>
</dbReference>
<dbReference type="SMR" id="Q8NSH0"/>
<dbReference type="STRING" id="196627.cg0809"/>
<dbReference type="KEGG" id="cgb:cg0809"/>
<dbReference type="KEGG" id="cgl:Cgl0705"/>
<dbReference type="PATRIC" id="fig|196627.13.peg.692"/>
<dbReference type="eggNOG" id="COG0424">
    <property type="taxonomic scope" value="Bacteria"/>
</dbReference>
<dbReference type="HOGENOM" id="CLU_040416_1_2_11"/>
<dbReference type="OrthoDB" id="3527985at2"/>
<dbReference type="BioCyc" id="CORYNE:G18NG-10267-MONOMER"/>
<dbReference type="Proteomes" id="UP000000582">
    <property type="component" value="Chromosome"/>
</dbReference>
<dbReference type="Proteomes" id="UP000001009">
    <property type="component" value="Chromosome"/>
</dbReference>
<dbReference type="GO" id="GO:0005737">
    <property type="term" value="C:cytoplasm"/>
    <property type="evidence" value="ECO:0007669"/>
    <property type="project" value="UniProtKB-SubCell"/>
</dbReference>
<dbReference type="GO" id="GO:0047429">
    <property type="term" value="F:nucleoside triphosphate diphosphatase activity"/>
    <property type="evidence" value="ECO:0007669"/>
    <property type="project" value="UniProtKB-EC"/>
</dbReference>
<dbReference type="GO" id="GO:0009117">
    <property type="term" value="P:nucleotide metabolic process"/>
    <property type="evidence" value="ECO:0007669"/>
    <property type="project" value="UniProtKB-KW"/>
</dbReference>
<dbReference type="CDD" id="cd00555">
    <property type="entry name" value="Maf"/>
    <property type="match status" value="1"/>
</dbReference>
<dbReference type="Gene3D" id="3.90.950.10">
    <property type="match status" value="1"/>
</dbReference>
<dbReference type="HAMAP" id="MF_00528">
    <property type="entry name" value="Maf"/>
    <property type="match status" value="1"/>
</dbReference>
<dbReference type="InterPro" id="IPR029001">
    <property type="entry name" value="ITPase-like_fam"/>
</dbReference>
<dbReference type="InterPro" id="IPR003697">
    <property type="entry name" value="Maf-like"/>
</dbReference>
<dbReference type="NCBIfam" id="TIGR00172">
    <property type="entry name" value="maf"/>
    <property type="match status" value="1"/>
</dbReference>
<dbReference type="PANTHER" id="PTHR43213">
    <property type="entry name" value="BIFUNCTIONAL DTTP/UTP PYROPHOSPHATASE/METHYLTRANSFERASE PROTEIN-RELATED"/>
    <property type="match status" value="1"/>
</dbReference>
<dbReference type="PANTHER" id="PTHR43213:SF5">
    <property type="entry name" value="BIFUNCTIONAL DTTP_UTP PYROPHOSPHATASE_METHYLTRANSFERASE PROTEIN-RELATED"/>
    <property type="match status" value="1"/>
</dbReference>
<dbReference type="Pfam" id="PF02545">
    <property type="entry name" value="Maf"/>
    <property type="match status" value="1"/>
</dbReference>
<dbReference type="PIRSF" id="PIRSF006305">
    <property type="entry name" value="Maf"/>
    <property type="match status" value="1"/>
</dbReference>
<dbReference type="SUPFAM" id="SSF52972">
    <property type="entry name" value="ITPase-like"/>
    <property type="match status" value="1"/>
</dbReference>
<feature type="chain" id="PRO_0000123018" description="Nucleoside triphosphate pyrophosphatase">
    <location>
        <begin position="1"/>
        <end position="197"/>
    </location>
</feature>
<feature type="active site" description="Proton acceptor" evidence="1">
    <location>
        <position position="72"/>
    </location>
</feature>
<proteinExistence type="inferred from homology"/>
<name>NTPP_CORGL</name>
<sequence length="197" mass="21248">MQIVLASQSPSRRRILNSAGVEPLIHPADVDEDALLHSLNGSAPEEIVRQLALAKAQVVAPSYPGDVVIGGDSMLLIDATLQGKPHTREATIERWKQQRGNKATLITGHAIIFGDEVIVESSSTNIHFAEASDVDIERYADSGEPLECAGAFTLEALGGWFIDSIEGDPSSVIGLSLPVVRRALYRLGFNASDFWNM</sequence>
<accession>Q8NSH0</accession>
<protein>
    <recommendedName>
        <fullName evidence="1">Nucleoside triphosphate pyrophosphatase</fullName>
        <ecNumber evidence="1">3.6.1.9</ecNumber>
    </recommendedName>
    <alternativeName>
        <fullName evidence="1">Nucleotide pyrophosphatase</fullName>
        <shortName evidence="1">Nucleotide PPase</shortName>
    </alternativeName>
</protein>